<proteinExistence type="inferred from homology"/>
<feature type="chain" id="PRO_1000024372" description="Iron-binding protein IscA">
    <location>
        <begin position="1"/>
        <end position="107"/>
    </location>
</feature>
<feature type="binding site" evidence="1">
    <location>
        <position position="35"/>
    </location>
    <ligand>
        <name>Fe cation</name>
        <dbReference type="ChEBI" id="CHEBI:24875"/>
    </ligand>
</feature>
<feature type="binding site" evidence="1">
    <location>
        <position position="99"/>
    </location>
    <ligand>
        <name>Fe cation</name>
        <dbReference type="ChEBI" id="CHEBI:24875"/>
    </ligand>
</feature>
<feature type="binding site" evidence="1">
    <location>
        <position position="101"/>
    </location>
    <ligand>
        <name>Fe cation</name>
        <dbReference type="ChEBI" id="CHEBI:24875"/>
    </ligand>
</feature>
<name>ISCA_ECOK1</name>
<gene>
    <name evidence="1" type="primary">iscA</name>
    <name type="ordered locus">Ecok1_24610</name>
    <name type="ORF">APECO1_3997</name>
</gene>
<dbReference type="EMBL" id="CP000468">
    <property type="protein sequence ID" value="ABJ01955.1"/>
    <property type="molecule type" value="Genomic_DNA"/>
</dbReference>
<dbReference type="RefSeq" id="WP_000028953.1">
    <property type="nucleotide sequence ID" value="NZ_CADILS010000012.1"/>
</dbReference>
<dbReference type="SMR" id="A1AE65"/>
<dbReference type="GeneID" id="93774608"/>
<dbReference type="KEGG" id="ecv:APECO1_3997"/>
<dbReference type="HOGENOM" id="CLU_069054_5_1_6"/>
<dbReference type="Proteomes" id="UP000008216">
    <property type="component" value="Chromosome"/>
</dbReference>
<dbReference type="GO" id="GO:0005829">
    <property type="term" value="C:cytosol"/>
    <property type="evidence" value="ECO:0007669"/>
    <property type="project" value="TreeGrafter"/>
</dbReference>
<dbReference type="GO" id="GO:0051537">
    <property type="term" value="F:2 iron, 2 sulfur cluster binding"/>
    <property type="evidence" value="ECO:0007669"/>
    <property type="project" value="TreeGrafter"/>
</dbReference>
<dbReference type="GO" id="GO:0005506">
    <property type="term" value="F:iron ion binding"/>
    <property type="evidence" value="ECO:0007669"/>
    <property type="project" value="UniProtKB-UniRule"/>
</dbReference>
<dbReference type="GO" id="GO:0016226">
    <property type="term" value="P:iron-sulfur cluster assembly"/>
    <property type="evidence" value="ECO:0007669"/>
    <property type="project" value="UniProtKB-UniRule"/>
</dbReference>
<dbReference type="FunFam" id="2.60.300.12:FF:000001">
    <property type="entry name" value="Iron-binding protein IscA"/>
    <property type="match status" value="1"/>
</dbReference>
<dbReference type="Gene3D" id="2.60.300.12">
    <property type="entry name" value="HesB-like domain"/>
    <property type="match status" value="1"/>
</dbReference>
<dbReference type="HAMAP" id="MF_01429">
    <property type="entry name" value="Fe_S_insert_IscA"/>
    <property type="match status" value="1"/>
</dbReference>
<dbReference type="InterPro" id="IPR050322">
    <property type="entry name" value="Fe-S_cluster_asmbl/transfer"/>
</dbReference>
<dbReference type="InterPro" id="IPR000361">
    <property type="entry name" value="FeS_biogenesis"/>
</dbReference>
<dbReference type="InterPro" id="IPR016092">
    <property type="entry name" value="FeS_cluster_insertion"/>
</dbReference>
<dbReference type="InterPro" id="IPR017870">
    <property type="entry name" value="FeS_cluster_insertion_CS"/>
</dbReference>
<dbReference type="InterPro" id="IPR035903">
    <property type="entry name" value="HesB-like_dom_sf"/>
</dbReference>
<dbReference type="InterPro" id="IPR011302">
    <property type="entry name" value="IscA_proteobacteria"/>
</dbReference>
<dbReference type="NCBIfam" id="TIGR00049">
    <property type="entry name" value="iron-sulfur cluster assembly accessory protein"/>
    <property type="match status" value="1"/>
</dbReference>
<dbReference type="NCBIfam" id="TIGR02011">
    <property type="entry name" value="IscA"/>
    <property type="match status" value="1"/>
</dbReference>
<dbReference type="NCBIfam" id="NF007049">
    <property type="entry name" value="PRK09502.1"/>
    <property type="match status" value="1"/>
</dbReference>
<dbReference type="PANTHER" id="PTHR10072:SF41">
    <property type="entry name" value="IRON-SULFUR CLUSTER ASSEMBLY 1 HOMOLOG, MITOCHONDRIAL"/>
    <property type="match status" value="1"/>
</dbReference>
<dbReference type="PANTHER" id="PTHR10072">
    <property type="entry name" value="IRON-SULFUR CLUSTER ASSEMBLY PROTEIN"/>
    <property type="match status" value="1"/>
</dbReference>
<dbReference type="Pfam" id="PF01521">
    <property type="entry name" value="Fe-S_biosyn"/>
    <property type="match status" value="1"/>
</dbReference>
<dbReference type="SUPFAM" id="SSF89360">
    <property type="entry name" value="HesB-like domain"/>
    <property type="match status" value="1"/>
</dbReference>
<dbReference type="PROSITE" id="PS01152">
    <property type="entry name" value="HESB"/>
    <property type="match status" value="1"/>
</dbReference>
<keyword id="KW-0408">Iron</keyword>
<keyword id="KW-0479">Metal-binding</keyword>
<keyword id="KW-1185">Reference proteome</keyword>
<sequence>MSITLSDSAAARVNTFLANRGKGFGLRLGVRTSGCSGMAYVLEFVDEPTPEDIVFEDKGVKVVVDGKSLQFLDGTQLDFVKEGLNEGFKFTNPNVKDECGCGESFHV</sequence>
<evidence type="ECO:0000255" key="1">
    <source>
        <dbReference type="HAMAP-Rule" id="MF_01429"/>
    </source>
</evidence>
<reference key="1">
    <citation type="journal article" date="2007" name="J. Bacteriol.">
        <title>The genome sequence of avian pathogenic Escherichia coli strain O1:K1:H7 shares strong similarities with human extraintestinal pathogenic E. coli genomes.</title>
        <authorList>
            <person name="Johnson T.J."/>
            <person name="Kariyawasam S."/>
            <person name="Wannemuehler Y."/>
            <person name="Mangiamele P."/>
            <person name="Johnson S.J."/>
            <person name="Doetkott C."/>
            <person name="Skyberg J.A."/>
            <person name="Lynne A.M."/>
            <person name="Johnson J.R."/>
            <person name="Nolan L.K."/>
        </authorList>
    </citation>
    <scope>NUCLEOTIDE SEQUENCE [LARGE SCALE GENOMIC DNA]</scope>
</reference>
<accession>A1AE65</accession>
<protein>
    <recommendedName>
        <fullName evidence="1">Iron-binding protein IscA</fullName>
    </recommendedName>
    <alternativeName>
        <fullName evidence="1">Iron-sulfur cluster assembly protein</fullName>
    </alternativeName>
</protein>
<organism>
    <name type="scientific">Escherichia coli O1:K1 / APEC</name>
    <dbReference type="NCBI Taxonomy" id="405955"/>
    <lineage>
        <taxon>Bacteria</taxon>
        <taxon>Pseudomonadati</taxon>
        <taxon>Pseudomonadota</taxon>
        <taxon>Gammaproteobacteria</taxon>
        <taxon>Enterobacterales</taxon>
        <taxon>Enterobacteriaceae</taxon>
        <taxon>Escherichia</taxon>
    </lineage>
</organism>
<comment type="function">
    <text evidence="1">Is able to transfer iron-sulfur clusters to apo-ferredoxin. Multiple cycles of [2Fe2S] cluster formation and transfer are observed, suggesting that IscA acts catalytically. Recruits intracellular free iron so as to provide iron for the assembly of transient iron-sulfur cluster in IscU in the presence of IscS, L-cysteine and the thioredoxin reductase system TrxA/TrxB.</text>
</comment>
<comment type="cofactor">
    <cofactor evidence="1">
        <name>Fe cation</name>
        <dbReference type="ChEBI" id="CHEBI:24875"/>
    </cofactor>
    <text evidence="1">Binds 2 iron ions per dimer. The dimer may bind additional iron ions.</text>
</comment>
<comment type="subunit">
    <text evidence="1">Homodimer; may form tetramers and higher multimers.</text>
</comment>
<comment type="similarity">
    <text evidence="1">Belongs to the HesB/IscA family.</text>
</comment>